<reference key="1">
    <citation type="journal article" date="1996" name="Nat. Genet.">
        <title>Mad-related genes in the human.</title>
        <authorList>
            <person name="Riggins G.J."/>
            <person name="Thiagalingam S."/>
            <person name="Rosenblum E."/>
            <person name="Weinstein C.L."/>
            <person name="Kern S.E."/>
            <person name="Hamilton S.R."/>
            <person name="Willson J.K.V."/>
            <person name="Markowitz S.D."/>
            <person name="Kinzler K.W."/>
            <person name="Vogelstein B.V."/>
        </authorList>
    </citation>
    <scope>NUCLEOTIDE SEQUENCE [MRNA] (ISOFORM 1)</scope>
</reference>
<reference key="2">
    <citation type="journal article" date="1996" name="Nature">
        <title>A human Mad protein acting as a BMP-regulated transcriptional activator.</title>
        <authorList>
            <person name="Liu F."/>
            <person name="Hata A."/>
            <person name="Baker J.C."/>
            <person name="Doody J."/>
            <person name="Carcamo J."/>
            <person name="Harland R.M."/>
            <person name="Massague J."/>
        </authorList>
    </citation>
    <scope>NUCLEOTIDE SEQUENCE [MRNA] (ISOFORM 1)</scope>
    <source>
        <tissue>Kidney</tissue>
    </source>
</reference>
<reference key="3">
    <citation type="journal article" date="1996" name="Cell">
        <title>MADR1, a MAD-related protein that functions in BMP2 signaling pathways.</title>
        <authorList>
            <person name="Hoodless P.A."/>
            <person name="Haerry T."/>
            <person name="Abdollah S."/>
            <person name="Stapleton M."/>
            <person name="O'Connor M.B."/>
            <person name="Attisano L."/>
            <person name="Wrana J.L."/>
        </authorList>
    </citation>
    <scope>NUCLEOTIDE SEQUENCE [MRNA] (ISOFORM 1)</scope>
    <scope>MUTAGENESIS OF GLY-419</scope>
</reference>
<reference key="4">
    <citation type="journal article" date="1996" name="J. Biol. Chem.">
        <title>Serine phosphorylation, chromosomal localization, and transforming growth factor-beta signal transduction by human bsp-1.</title>
        <authorList>
            <person name="Lechleider R.J."/>
            <person name="de Caestecker M.P."/>
            <person name="Dehejia A."/>
            <person name="Polymeropoulos M.H."/>
            <person name="Roberts A.B."/>
        </authorList>
    </citation>
    <scope>NUCLEOTIDE SEQUENCE [MRNA] (ISOFORM 1)</scope>
    <source>
        <tissue>Mammary carcinoma</tissue>
    </source>
</reference>
<reference key="5">
    <citation type="journal article" date="1996" name="Nature">
        <title>Receptor-associated Mad homologues synergize as effectors of the TGF-beta response.</title>
        <authorList>
            <person name="Zhang Y."/>
            <person name="Feng X.-H."/>
            <person name="Wu R.-Y."/>
            <person name="Derynck R."/>
        </authorList>
    </citation>
    <scope>NUCLEOTIDE SEQUENCE [MRNA] (ISOFORM 1)</scope>
    <source>
        <tissue>Placenta</tissue>
    </source>
</reference>
<reference key="6">
    <citation type="submission" date="2003-05" db="EMBL/GenBank/DDBJ databases">
        <title>Cloning of human full-length CDSs in BD Creator(TM) system donor vector.</title>
        <authorList>
            <person name="Kalnine N."/>
            <person name="Chen X."/>
            <person name="Rolfs A."/>
            <person name="Halleck A."/>
            <person name="Hines L."/>
            <person name="Eisenstein S."/>
            <person name="Koundinya M."/>
            <person name="Raphael J."/>
            <person name="Moreira D."/>
            <person name="Kelley T."/>
            <person name="LaBaer J."/>
            <person name="Lin Y."/>
            <person name="Phelan M."/>
            <person name="Farmer A."/>
        </authorList>
    </citation>
    <scope>NUCLEOTIDE SEQUENCE [LARGE SCALE MRNA] (ISOFORM 1)</scope>
</reference>
<reference key="7">
    <citation type="journal article" date="2004" name="Nat. Genet.">
        <title>Complete sequencing and characterization of 21,243 full-length human cDNAs.</title>
        <authorList>
            <person name="Ota T."/>
            <person name="Suzuki Y."/>
            <person name="Nishikawa T."/>
            <person name="Otsuki T."/>
            <person name="Sugiyama T."/>
            <person name="Irie R."/>
            <person name="Wakamatsu A."/>
            <person name="Hayashi K."/>
            <person name="Sato H."/>
            <person name="Nagai K."/>
            <person name="Kimura K."/>
            <person name="Makita H."/>
            <person name="Sekine M."/>
            <person name="Obayashi M."/>
            <person name="Nishi T."/>
            <person name="Shibahara T."/>
            <person name="Tanaka T."/>
            <person name="Ishii S."/>
            <person name="Yamamoto J."/>
            <person name="Saito K."/>
            <person name="Kawai Y."/>
            <person name="Isono Y."/>
            <person name="Nakamura Y."/>
            <person name="Nagahari K."/>
            <person name="Murakami K."/>
            <person name="Yasuda T."/>
            <person name="Iwayanagi T."/>
            <person name="Wagatsuma M."/>
            <person name="Shiratori A."/>
            <person name="Sudo H."/>
            <person name="Hosoiri T."/>
            <person name="Kaku Y."/>
            <person name="Kodaira H."/>
            <person name="Kondo H."/>
            <person name="Sugawara M."/>
            <person name="Takahashi M."/>
            <person name="Kanda K."/>
            <person name="Yokoi T."/>
            <person name="Furuya T."/>
            <person name="Kikkawa E."/>
            <person name="Omura Y."/>
            <person name="Abe K."/>
            <person name="Kamihara K."/>
            <person name="Katsuta N."/>
            <person name="Sato K."/>
            <person name="Tanikawa M."/>
            <person name="Yamazaki M."/>
            <person name="Ninomiya K."/>
            <person name="Ishibashi T."/>
            <person name="Yamashita H."/>
            <person name="Murakawa K."/>
            <person name="Fujimori K."/>
            <person name="Tanai H."/>
            <person name="Kimata M."/>
            <person name="Watanabe M."/>
            <person name="Hiraoka S."/>
            <person name="Chiba Y."/>
            <person name="Ishida S."/>
            <person name="Ono Y."/>
            <person name="Takiguchi S."/>
            <person name="Watanabe S."/>
            <person name="Yosida M."/>
            <person name="Hotuta T."/>
            <person name="Kusano J."/>
            <person name="Kanehori K."/>
            <person name="Takahashi-Fujii A."/>
            <person name="Hara H."/>
            <person name="Tanase T.-O."/>
            <person name="Nomura Y."/>
            <person name="Togiya S."/>
            <person name="Komai F."/>
            <person name="Hara R."/>
            <person name="Takeuchi K."/>
            <person name="Arita M."/>
            <person name="Imose N."/>
            <person name="Musashino K."/>
            <person name="Yuuki H."/>
            <person name="Oshima A."/>
            <person name="Sasaki N."/>
            <person name="Aotsuka S."/>
            <person name="Yoshikawa Y."/>
            <person name="Matsunawa H."/>
            <person name="Ichihara T."/>
            <person name="Shiohata N."/>
            <person name="Sano S."/>
            <person name="Moriya S."/>
            <person name="Momiyama H."/>
            <person name="Satoh N."/>
            <person name="Takami S."/>
            <person name="Terashima Y."/>
            <person name="Suzuki O."/>
            <person name="Nakagawa S."/>
            <person name="Senoh A."/>
            <person name="Mizoguchi H."/>
            <person name="Goto Y."/>
            <person name="Shimizu F."/>
            <person name="Wakebe H."/>
            <person name="Hishigaki H."/>
            <person name="Watanabe T."/>
            <person name="Sugiyama A."/>
            <person name="Takemoto M."/>
            <person name="Kawakami B."/>
            <person name="Yamazaki M."/>
            <person name="Watanabe K."/>
            <person name="Kumagai A."/>
            <person name="Itakura S."/>
            <person name="Fukuzumi Y."/>
            <person name="Fujimori Y."/>
            <person name="Komiyama M."/>
            <person name="Tashiro H."/>
            <person name="Tanigami A."/>
            <person name="Fujiwara T."/>
            <person name="Ono T."/>
            <person name="Yamada K."/>
            <person name="Fujii Y."/>
            <person name="Ozaki K."/>
            <person name="Hirao M."/>
            <person name="Ohmori Y."/>
            <person name="Kawabata A."/>
            <person name="Hikiji T."/>
            <person name="Kobatake N."/>
            <person name="Inagaki H."/>
            <person name="Ikema Y."/>
            <person name="Okamoto S."/>
            <person name="Okitani R."/>
            <person name="Kawakami T."/>
            <person name="Noguchi S."/>
            <person name="Itoh T."/>
            <person name="Shigeta K."/>
            <person name="Senba T."/>
            <person name="Matsumura K."/>
            <person name="Nakajima Y."/>
            <person name="Mizuno T."/>
            <person name="Morinaga M."/>
            <person name="Sasaki M."/>
            <person name="Togashi T."/>
            <person name="Oyama M."/>
            <person name="Hata H."/>
            <person name="Watanabe M."/>
            <person name="Komatsu T."/>
            <person name="Mizushima-Sugano J."/>
            <person name="Satoh T."/>
            <person name="Shirai Y."/>
            <person name="Takahashi Y."/>
            <person name="Nakagawa K."/>
            <person name="Okumura K."/>
            <person name="Nagase T."/>
            <person name="Nomura N."/>
            <person name="Kikuchi H."/>
            <person name="Masuho Y."/>
            <person name="Yamashita R."/>
            <person name="Nakai K."/>
            <person name="Yada T."/>
            <person name="Nakamura Y."/>
            <person name="Ohara O."/>
            <person name="Isogai T."/>
            <person name="Sugano S."/>
        </authorList>
    </citation>
    <scope>NUCLEOTIDE SEQUENCE [LARGE SCALE MRNA] (ISOFORM 1)</scope>
    <source>
        <tissue>Uterus</tissue>
    </source>
</reference>
<reference key="8">
    <citation type="journal article" date="2007" name="BMC Genomics">
        <title>The full-ORF clone resource of the German cDNA consortium.</title>
        <authorList>
            <person name="Bechtel S."/>
            <person name="Rosenfelder H."/>
            <person name="Duda A."/>
            <person name="Schmidt C.P."/>
            <person name="Ernst U."/>
            <person name="Wellenreuther R."/>
            <person name="Mehrle A."/>
            <person name="Schuster C."/>
            <person name="Bahr A."/>
            <person name="Bloecker H."/>
            <person name="Heubner D."/>
            <person name="Hoerlein A."/>
            <person name="Michel G."/>
            <person name="Wedler H."/>
            <person name="Koehrer K."/>
            <person name="Ottenwaelder B."/>
            <person name="Poustka A."/>
            <person name="Wiemann S."/>
            <person name="Schupp I."/>
        </authorList>
    </citation>
    <scope>NUCLEOTIDE SEQUENCE [LARGE SCALE MRNA] (ISOFORM 2)</scope>
    <source>
        <tissue>Uterus</tissue>
    </source>
</reference>
<reference key="9">
    <citation type="submission" date="2005-09" db="EMBL/GenBank/DDBJ databases">
        <authorList>
            <person name="Mural R.J."/>
            <person name="Istrail S."/>
            <person name="Sutton G.G."/>
            <person name="Florea L."/>
            <person name="Halpern A.L."/>
            <person name="Mobarry C.M."/>
            <person name="Lippert R."/>
            <person name="Walenz B."/>
            <person name="Shatkay H."/>
            <person name="Dew I."/>
            <person name="Miller J.R."/>
            <person name="Flanigan M.J."/>
            <person name="Edwards N.J."/>
            <person name="Bolanos R."/>
            <person name="Fasulo D."/>
            <person name="Halldorsson B.V."/>
            <person name="Hannenhalli S."/>
            <person name="Turner R."/>
            <person name="Yooseph S."/>
            <person name="Lu F."/>
            <person name="Nusskern D.R."/>
            <person name="Shue B.C."/>
            <person name="Zheng X.H."/>
            <person name="Zhong F."/>
            <person name="Delcher A.L."/>
            <person name="Huson D.H."/>
            <person name="Kravitz S.A."/>
            <person name="Mouchard L."/>
            <person name="Reinert K."/>
            <person name="Remington K.A."/>
            <person name="Clark A.G."/>
            <person name="Waterman M.S."/>
            <person name="Eichler E.E."/>
            <person name="Adams M.D."/>
            <person name="Hunkapiller M.W."/>
            <person name="Myers E.W."/>
            <person name="Venter J.C."/>
        </authorList>
    </citation>
    <scope>NUCLEOTIDE SEQUENCE [LARGE SCALE GENOMIC DNA]</scope>
</reference>
<reference key="10">
    <citation type="journal article" date="2004" name="Genome Res.">
        <title>The status, quality, and expansion of the NIH full-length cDNA project: the Mammalian Gene Collection (MGC).</title>
        <authorList>
            <consortium name="The MGC Project Team"/>
        </authorList>
    </citation>
    <scope>NUCLEOTIDE SEQUENCE [LARGE SCALE MRNA] (ISOFORM 1)</scope>
    <source>
        <tissue>Placenta</tissue>
    </source>
</reference>
<reference key="11">
    <citation type="submission" date="2009-10" db="UniProtKB">
        <authorList>
            <person name="Bienvenut W.V."/>
            <person name="Lempens A."/>
            <person name="Norman J.C."/>
        </authorList>
    </citation>
    <scope>PROTEIN SEQUENCE OF 1-15; 33-39; 129-157; 283-306 AND 309-319</scope>
    <scope>ACETYLATION AT MET-1</scope>
    <scope>IDENTIFICATION BY MASS SPECTROMETRY</scope>
    <source>
        <tissue>Ovarian carcinoma</tissue>
    </source>
</reference>
<reference key="12">
    <citation type="journal article" date="1997" name="Nature">
        <title>Opposing BMP and EGF signalling pathways converge on the TGF-beta family mediator Smad1.</title>
        <authorList>
            <person name="Kretzschmar M."/>
            <person name="Doody J."/>
            <person name="Massague J."/>
        </authorList>
    </citation>
    <scope>FUNCTION</scope>
    <scope>PHOSPHORYLATION</scope>
    <scope>SUBCELLULAR LOCATION</scope>
</reference>
<reference key="13">
    <citation type="journal article" date="1997" name="Genes Dev.">
        <title>The TGF-beta family mediator Smad1 is phosphorylated directly and activated functionally by the BMP receptor kinase.</title>
        <authorList>
            <person name="Kretzschmar M."/>
            <person name="Liu F."/>
            <person name="Hata A."/>
            <person name="Doody J."/>
            <person name="Massague J."/>
        </authorList>
    </citation>
    <scope>PHOSPHORYLATION AT SER-463 AND SER-465</scope>
</reference>
<reference key="14">
    <citation type="journal article" date="1998" name="Annu. Rev. Biochem.">
        <title>TGF-beta signal transduction.</title>
        <authorList>
            <person name="Massague J."/>
        </authorList>
    </citation>
    <scope>REVIEW</scope>
</reference>
<reference key="15">
    <citation type="journal article" date="1999" name="Cytokine Growth Factor Rev.">
        <title>Remarkable versatility of Smad proteins in the nucleus of transforming growth factor-beta activated cells.</title>
        <authorList>
            <person name="Verschueren K."/>
            <person name="Huylebroeck D."/>
        </authorList>
    </citation>
    <scope>REVIEW</scope>
</reference>
<reference key="16">
    <citation type="journal article" date="2000" name="Cell">
        <title>OAZ uses distinct DNA- and protein-binding zinc fingers in separate BMP-Smad and Olf signaling pathways.</title>
        <authorList>
            <person name="Hata A."/>
            <person name="Seoane J."/>
            <person name="Lagna G."/>
            <person name="Montalvo E."/>
            <person name="Hemmati-Brivanlou A."/>
            <person name="Massague J."/>
        </authorList>
    </citation>
    <scope>INTERACTION WITH ZNF423</scope>
</reference>
<reference key="17">
    <citation type="journal article" date="2000" name="Cytokine Growth Factor Rev.">
        <title>The Smad pathway.</title>
        <authorList>
            <person name="Wrana J.L."/>
            <person name="Attisano L."/>
        </authorList>
    </citation>
    <scope>REVIEW</scope>
</reference>
<reference key="18">
    <citation type="journal article" date="2000" name="Cytokine Growth Factor Rev.">
        <title>TGF-beta signaling by Smad proteins.</title>
        <authorList>
            <person name="Miyazono K."/>
        </authorList>
    </citation>
    <scope>REVIEW</scope>
</reference>
<reference key="19">
    <citation type="journal article" date="2002" name="BMC Cell Biol.">
        <title>A novel link between the proteasome pathway and the signal transduction pathway of the bone morphogenetic proteins (BMPs).</title>
        <authorList>
            <person name="Lin Y."/>
            <person name="Martin J."/>
            <person name="Gruendler C."/>
            <person name="Farley J."/>
            <person name="Meng X."/>
            <person name="Li B.-Y."/>
            <person name="Lechleider R."/>
            <person name="Huff C."/>
            <person name="Kim R.H."/>
            <person name="Grasser W.A."/>
            <person name="Paralkar V."/>
            <person name="Wang T."/>
        </authorList>
    </citation>
    <scope>IDENTIFICATION IN A COMPLEX WITH PSMB4 AND OAZ1</scope>
    <scope>FUNCTION</scope>
</reference>
<reference key="20">
    <citation type="journal article" date="2004" name="Blood">
        <title>Early hematopoietic zinc finger protein (EHZF), the human homolog to mouse Evi3, is highly expressed in primitive human hematopoietic cells.</title>
        <authorList>
            <person name="Bond H.M."/>
            <person name="Mesuraca M."/>
            <person name="Carbone E."/>
            <person name="Bonelli P."/>
            <person name="Agosti V."/>
            <person name="Amodio N."/>
            <person name="De Rosa G."/>
            <person name="Di Nicola M."/>
            <person name="Gianni A.M."/>
            <person name="Moore M.A."/>
            <person name="Hata A."/>
            <person name="Grieco M."/>
            <person name="Morrone G."/>
            <person name="Venuta S."/>
        </authorList>
    </citation>
    <scope>INTERACTION WITH ZNF521</scope>
</reference>
<reference key="21">
    <citation type="journal article" date="2005" name="J. Biol. Chem.">
        <title>The integral inner nuclear membrane protein MAN1 physically interacts with the R-Smad proteins to repress signaling by the transforming growth factor-{beta} superfamily of cytokines.</title>
        <authorList>
            <person name="Pan D."/>
            <person name="Estevez-Salmeron L.D."/>
            <person name="Stroschein S.L."/>
            <person name="Zhu X."/>
            <person name="He J."/>
            <person name="Zhou S."/>
            <person name="Luo K."/>
        </authorList>
    </citation>
    <scope>SUBCELLULAR LOCATION</scope>
    <scope>INTERACTION WITH LEMD3</scope>
</reference>
<reference key="22">
    <citation type="journal article" date="2007" name="Mol. Cell. Neurosci.">
        <title>Fussel-15, a novel Ski/Sno homolog protein, antagonizes BMP signaling.</title>
        <authorList>
            <person name="Arndt S."/>
            <person name="Poser I."/>
            <person name="Moser M."/>
            <person name="Bosserhoff A.-K."/>
        </authorList>
    </citation>
    <scope>INTERACTION WITH SKOR1</scope>
</reference>
<reference key="23">
    <citation type="journal article" date="2011" name="BMC Syst. Biol.">
        <title>Initial characterization of the human central proteome.</title>
        <authorList>
            <person name="Burkard T.R."/>
            <person name="Planyavsky M."/>
            <person name="Kaupe I."/>
            <person name="Breitwieser F.P."/>
            <person name="Buerckstuemmer T."/>
            <person name="Bennett K.L."/>
            <person name="Superti-Furga G."/>
            <person name="Colinge J."/>
        </authorList>
    </citation>
    <scope>IDENTIFICATION BY MASS SPECTROMETRY [LARGE SCALE ANALYSIS]</scope>
</reference>
<reference key="24">
    <citation type="journal article" date="2011" name="Proc. Natl. Acad. Sci. U.S.A.">
        <title>Smad inhibition by the Ste20 kinase Misshapen.</title>
        <authorList>
            <person name="Kaneko S."/>
            <person name="Chen X."/>
            <person name="Lu P."/>
            <person name="Yao X."/>
            <person name="Wright T.G."/>
            <person name="Rajurkar M."/>
            <person name="Kariya K."/>
            <person name="Mao J."/>
            <person name="Ip Y.T."/>
            <person name="Xu L."/>
        </authorList>
    </citation>
    <scope>PHOSPHORYLATION AT THR-322</scope>
</reference>
<reference key="25">
    <citation type="journal article" date="2011" name="Nat. Cell Biol.">
        <title>USP15 is a deubiquitylating enzyme for receptor-activated SMADs.</title>
        <authorList>
            <person name="Inui M."/>
            <person name="Manfrin A."/>
            <person name="Mamidi A."/>
            <person name="Martello G."/>
            <person name="Morsut L."/>
            <person name="Soligo S."/>
            <person name="Enzo E."/>
            <person name="Moro S."/>
            <person name="Polo S."/>
            <person name="Dupont S."/>
            <person name="Cordenonsi M."/>
            <person name="Piccolo S."/>
        </authorList>
    </citation>
    <scope>UBIQUITINATION</scope>
    <scope>DEUBIQUITINATION BY USP15</scope>
    <scope>DNA-BINDING</scope>
    <scope>INTERACTION WITH USP15</scope>
</reference>
<reference key="26">
    <citation type="journal article" date="2012" name="Cell. Signal.">
        <title>Protein phosphatase 5 modulates SMAD3 function in the transforming growth factor-beta pathway.</title>
        <authorList>
            <person name="Bruce D.L."/>
            <person name="Macartney T."/>
            <person name="Yong W."/>
            <person name="Shou W."/>
            <person name="Sapkota G.P."/>
        </authorList>
    </citation>
    <scope>SUBCELLULAR LOCATION</scope>
</reference>
<reference key="27">
    <citation type="journal article" date="2011" name="Hum. Mutat.">
        <title>Molecular genetic characterization of SMAD signaling molecules in pulmonary arterial hypertension.</title>
        <authorList>
            <person name="Nasim M.T."/>
            <person name="Ogo T."/>
            <person name="Ahmed M."/>
            <person name="Randall R."/>
            <person name="Chowdhury H.M."/>
            <person name="Snape K.M."/>
            <person name="Bradshaw T.Y."/>
            <person name="Southgate L."/>
            <person name="Lee G.J."/>
            <person name="Jackson I."/>
            <person name="Lord G.M."/>
            <person name="Gibbs J.S."/>
            <person name="Wilkins M.R."/>
            <person name="Ohta-Ogo K."/>
            <person name="Nakamura K."/>
            <person name="Girerd B."/>
            <person name="Coulet F."/>
            <person name="Soubrier F."/>
            <person name="Humbert M."/>
            <person name="Morrell N.W."/>
            <person name="Trembath R.C."/>
            <person name="Machado R.D."/>
        </authorList>
    </citation>
    <scope>POSSIBLE INVOLVEMENT IN PULMONARY HYPERTENSION</scope>
    <scope>VARIANT ALA-3</scope>
    <scope>CHARACTERIZATION OF VARIANT ALA-3</scope>
</reference>
<reference key="28">
    <citation type="journal article" date="2012" name="Proc. Natl. Acad. Sci. U.S.A.">
        <title>N-terminal acetylome analyses and functional insights of the N-terminal acetyltransferase NatB.</title>
        <authorList>
            <person name="Van Damme P."/>
            <person name="Lasa M."/>
            <person name="Polevoda B."/>
            <person name="Gazquez C."/>
            <person name="Elosegui-Artola A."/>
            <person name="Kim D.S."/>
            <person name="De Juan-Pardo E."/>
            <person name="Demeyer K."/>
            <person name="Hole K."/>
            <person name="Larrea E."/>
            <person name="Timmerman E."/>
            <person name="Prieto J."/>
            <person name="Arnesen T."/>
            <person name="Sherman F."/>
            <person name="Gevaert K."/>
            <person name="Aldabe R."/>
        </authorList>
    </citation>
    <scope>IDENTIFICATION BY MASS SPECTROMETRY [LARGE SCALE ANALYSIS]</scope>
</reference>
<reference key="29">
    <citation type="journal article" date="2013" name="J. Biol. Chem.">
        <title>Myotubularin-related protein 4 (MTMR4) attenuates BMP/Dpp signaling by dephosphorylation of Smad proteins.</title>
        <authorList>
            <person name="Yu J."/>
            <person name="He X."/>
            <person name="Chen Y.G."/>
            <person name="Hao Y."/>
            <person name="Yang S."/>
            <person name="Wang L."/>
            <person name="Pan L."/>
            <person name="Tang H."/>
        </authorList>
    </citation>
    <scope>INTERACTION WITH MTMR4</scope>
</reference>
<reference key="30">
    <citation type="journal article" date="2014" name="Open Biol.">
        <title>Protein associated with SMAD1 (PAWS1/FAM83G) is a substrate for type I bone morphogenetic protein receptors and modulates bone morphogenetic protein signalling.</title>
        <authorList>
            <person name="Vogt J."/>
            <person name="Dingwell K.S."/>
            <person name="Herhaus L."/>
            <person name="Gourlay R."/>
            <person name="Macartney T."/>
            <person name="Campbell D."/>
            <person name="Smith J.C."/>
            <person name="Sapkota G.P."/>
        </authorList>
    </citation>
    <scope>INTERACTION WITH FAM83G</scope>
</reference>
<reference key="31">
    <citation type="journal article" date="2015" name="Mol. Cell. Biol.">
        <title>Nuclear export of Smads by RanBP3L regulates bone morphogenetic protein signaling and mesenchymal stem cell differentiation.</title>
        <authorList>
            <person name="Chen F."/>
            <person name="Lin X."/>
            <person name="Xu P."/>
            <person name="Zhang Z."/>
            <person name="Chen Y."/>
            <person name="Wang C."/>
            <person name="Han J."/>
            <person name="Zhao B."/>
            <person name="Xiao M."/>
            <person name="Feng X.H."/>
        </authorList>
    </citation>
    <scope>INTERACTION WITH RANBP3L</scope>
    <scope>MUTAGENESIS OF 463-SER--SER-465</scope>
</reference>
<reference key="32">
    <citation type="journal article" date="2018" name="Sci. Signal.">
        <title>The DUF1669 domain of FAM83 family proteins anchor casein kinase 1 isoforms.</title>
        <authorList>
            <person name="Fulcher L.J."/>
            <person name="Bozatzi P."/>
            <person name="Tachie-Menson T."/>
            <person name="Wu K.Z.L."/>
            <person name="Cummins T.D."/>
            <person name="Bufton J.C."/>
            <person name="Pinkas D.M."/>
            <person name="Dunbar K."/>
            <person name="Shrestha S."/>
            <person name="Wood N.T."/>
            <person name="Weidlich S."/>
            <person name="Macartney T.J."/>
            <person name="Varghese J."/>
            <person name="Gourlay R."/>
            <person name="Campbell D.G."/>
            <person name="Dingwell K.S."/>
            <person name="Smith J.C."/>
            <person name="Bullock A.N."/>
            <person name="Sapkota G.P."/>
        </authorList>
    </citation>
    <scope>INTERACTION WITH FAM83G</scope>
</reference>
<reference key="33">
    <citation type="journal article" date="2021" name="J. Biol. Chem.">
        <title>Arginine methylation of R81 in Smad6 confines BMP-induced Smad1 signaling.</title>
        <authorList>
            <person name="Wu J."/>
            <person name="Chen X."/>
            <person name="Sehgal P."/>
            <person name="Zhang T."/>
            <person name="Jackson-Weaver O."/>
            <person name="Gou Y."/>
            <person name="Bautch V."/>
            <person name="Frenkel B."/>
            <person name="Sun H."/>
            <person name="Xu J."/>
        </authorList>
    </citation>
    <scope>FUNCTION</scope>
    <scope>INTERACTION WITH SMAD4 AND SMAD6</scope>
</reference>
<reference key="34">
    <citation type="journal article" date="2001" name="Mol. Cell">
        <title>Structural basis of Smad1 activation by receptor kinase phosphorylation.</title>
        <authorList>
            <person name="Qin B.Y."/>
            <person name="Chacko B.M."/>
            <person name="Lam S.S."/>
            <person name="de Caestecker M.P."/>
            <person name="Correia J.J."/>
            <person name="Lin K."/>
        </authorList>
    </citation>
    <scope>X-RAY CRYSTALLOGRAPHY (2.5 ANGSTROMS) OF 248-465</scope>
    <scope>PHOSPHORYLATION AT SER-463 AND SER-465</scope>
    <scope>SUBUNIT</scope>
    <scope>MUTAGENESIS OF ASP-297; VAL-317; LYS-373; LYS-418; TYR-424; ARG-426 AND ASP-448</scope>
</reference>
<reference evidence="29 30 31 32 33 34" key="35">
    <citation type="journal article" date="2011" name="Genes Dev.">
        <title>A Smad action turnover switch operated by WW domain readers of a phosphoserine code.</title>
        <authorList>
            <person name="Aragon E."/>
            <person name="Goerner N."/>
            <person name="Zaromytidou A.I."/>
            <person name="Xi Q."/>
            <person name="Escobedo A."/>
            <person name="Massague J."/>
            <person name="Macias M.J."/>
        </authorList>
    </citation>
    <scope>STRUCTURE BY NMR OF 220-233</scope>
    <scope>PHOSPHORYLATION</scope>
    <scope>FUNCTION</scope>
    <scope>INTERACTION WITH YAP1</scope>
</reference>
<reference evidence="35 36" key="36">
    <citation type="journal article" date="2011" name="J. Biol. Chem.">
        <title>Molecular mechanism of the negative regulation of Smad1/5 protein by carboxyl terminus of Hsc70-interacting protein (CHIP).</title>
        <authorList>
            <person name="Wang L."/>
            <person name="Liu Y.T."/>
            <person name="Hao R."/>
            <person name="Chen L."/>
            <person name="Chang Z."/>
            <person name="Wang H.R."/>
            <person name="Wang Z.X."/>
            <person name="Wu J.W."/>
        </authorList>
    </citation>
    <scope>X-RAY CRYSTALLOGRAPHY (1.54 ANGSTROMS) OF 456-465</scope>
    <scope>FUNCTION</scope>
    <scope>UBIQUITINATION</scope>
    <scope>MUTAGENESIS OF ILE-461 AND VAL-464</scope>
    <scope>INTERACTION WITH SMAD4</scope>
</reference>
<proteinExistence type="evidence at protein level"/>
<protein>
    <recommendedName>
        <fullName>Mothers against decapentaplegic homolog 1</fullName>
        <shortName>MAD homolog 1</shortName>
        <shortName>Mothers against DPP homolog 1</shortName>
    </recommendedName>
    <alternativeName>
        <fullName>JV4-1</fullName>
    </alternativeName>
    <alternativeName>
        <fullName>Mad-related protein 1</fullName>
    </alternativeName>
    <alternativeName>
        <fullName>SMAD family member 1</fullName>
        <shortName>SMAD 1</shortName>
        <shortName>Smad1</shortName>
        <shortName>hSMAD1</shortName>
    </alternativeName>
    <alternativeName>
        <fullName>Transforming growth factor-beta-signaling protein 1</fullName>
        <shortName>BSP-1</shortName>
    </alternativeName>
</protein>
<keyword id="KW-0002">3D-structure</keyword>
<keyword id="KW-0007">Acetylation</keyword>
<keyword id="KW-0025">Alternative splicing</keyword>
<keyword id="KW-0963">Cytoplasm</keyword>
<keyword id="KW-0903">Direct protein sequencing</keyword>
<keyword id="KW-0238">DNA-binding</keyword>
<keyword id="KW-0479">Metal-binding</keyword>
<keyword id="KW-0539">Nucleus</keyword>
<keyword id="KW-0597">Phosphoprotein</keyword>
<keyword id="KW-1267">Proteomics identification</keyword>
<keyword id="KW-1185">Reference proteome</keyword>
<keyword id="KW-0804">Transcription</keyword>
<keyword id="KW-0805">Transcription regulation</keyword>
<keyword id="KW-0832">Ubl conjugation</keyword>
<keyword id="KW-0862">Zinc</keyword>
<accession>Q15797</accession>
<accession>A8KAJ0</accession>
<accession>D3DNZ9</accession>
<accession>Q16636</accession>
<accession>Q9UFT8</accession>
<gene>
    <name type="primary">SMAD1</name>
    <name type="synonym">BSP1</name>
    <name type="synonym">MADH1</name>
    <name type="synonym">MADR1</name>
</gene>
<evidence type="ECO:0000250" key="1"/>
<evidence type="ECO:0000250" key="2">
    <source>
        <dbReference type="UniProtKB" id="P70340"/>
    </source>
</evidence>
<evidence type="ECO:0000255" key="3">
    <source>
        <dbReference type="PROSITE-ProRule" id="PRU00438"/>
    </source>
</evidence>
<evidence type="ECO:0000255" key="4">
    <source>
        <dbReference type="PROSITE-ProRule" id="PRU00439"/>
    </source>
</evidence>
<evidence type="ECO:0000256" key="5">
    <source>
        <dbReference type="SAM" id="MobiDB-lite"/>
    </source>
</evidence>
<evidence type="ECO:0000269" key="6">
    <source>
    </source>
</evidence>
<evidence type="ECO:0000269" key="7">
    <source>
    </source>
</evidence>
<evidence type="ECO:0000269" key="8">
    <source>
    </source>
</evidence>
<evidence type="ECO:0000269" key="9">
    <source>
    </source>
</evidence>
<evidence type="ECO:0000269" key="10">
    <source>
    </source>
</evidence>
<evidence type="ECO:0000269" key="11">
    <source>
    </source>
</evidence>
<evidence type="ECO:0000269" key="12">
    <source>
    </source>
</evidence>
<evidence type="ECO:0000269" key="13">
    <source>
    </source>
</evidence>
<evidence type="ECO:0000269" key="14">
    <source>
    </source>
</evidence>
<evidence type="ECO:0000269" key="15">
    <source>
    </source>
</evidence>
<evidence type="ECO:0000269" key="16">
    <source>
    </source>
</evidence>
<evidence type="ECO:0000269" key="17">
    <source>
    </source>
</evidence>
<evidence type="ECO:0000269" key="18">
    <source>
    </source>
</evidence>
<evidence type="ECO:0000269" key="19">
    <source>
    </source>
</evidence>
<evidence type="ECO:0000269" key="20">
    <source>
    </source>
</evidence>
<evidence type="ECO:0000269" key="21">
    <source>
    </source>
</evidence>
<evidence type="ECO:0000269" key="22">
    <source>
    </source>
</evidence>
<evidence type="ECO:0000269" key="23">
    <source>
    </source>
</evidence>
<evidence type="ECO:0000269" key="24">
    <source>
    </source>
</evidence>
<evidence type="ECO:0000269" key="25">
    <source>
    </source>
</evidence>
<evidence type="ECO:0000269" key="26">
    <source ref="11"/>
</evidence>
<evidence type="ECO:0000303" key="27">
    <source>
    </source>
</evidence>
<evidence type="ECO:0000305" key="28"/>
<evidence type="ECO:0007744" key="29">
    <source>
        <dbReference type="PDB" id="2LAW"/>
    </source>
</evidence>
<evidence type="ECO:0007744" key="30">
    <source>
        <dbReference type="PDB" id="2LAX"/>
    </source>
</evidence>
<evidence type="ECO:0007744" key="31">
    <source>
        <dbReference type="PDB" id="2LAY"/>
    </source>
</evidence>
<evidence type="ECO:0007744" key="32">
    <source>
        <dbReference type="PDB" id="2LAZ"/>
    </source>
</evidence>
<evidence type="ECO:0007744" key="33">
    <source>
        <dbReference type="PDB" id="2LB0"/>
    </source>
</evidence>
<evidence type="ECO:0007744" key="34">
    <source>
        <dbReference type="PDB" id="2LB1"/>
    </source>
</evidence>
<evidence type="ECO:0007744" key="35">
    <source>
        <dbReference type="PDB" id="3Q47"/>
    </source>
</evidence>
<evidence type="ECO:0007744" key="36">
    <source>
        <dbReference type="PDB" id="3Q4A"/>
    </source>
</evidence>
<evidence type="ECO:0007829" key="37">
    <source>
        <dbReference type="PDB" id="1KHU"/>
    </source>
</evidence>
<evidence type="ECO:0007829" key="38">
    <source>
        <dbReference type="PDB" id="3Q47"/>
    </source>
</evidence>
<evidence type="ECO:0007829" key="39">
    <source>
        <dbReference type="PDB" id="5ZOK"/>
    </source>
</evidence>
<sequence length="465" mass="52260">MNVTSLFSFTSPAVKRLLGWKQGDEEEKWAEKAVDALVKKLKKKKGAMEELEKALSCPGQPSNCVTIPRSLDGRLQVSHRKGLPHVIYCRVWRWPDLQSHHELKPLECCEFPFGSKQKEVCINPYHYKRVESPVLPPVLVPRHSEYNPQHSLLAQFRNLGQNEPHMPLNATFPDSFQQPNSHPFPHSPNSSYPNSPGSSSSTYPHSPTSSDPGSPFQMPADTPPPAYLPPEDPMTQDGSQPMDTNMMAPPLPSEINRGDVQAVAYEEPKHWCSIVYYELNNRVGEAFHASSTSVLVDGFTDPSNNKNRFCLGLLSNVNRNSTIENTRRHIGKGVHLYYVGGEVYAECLSDSSIFVQSRNCNYHHGFHPTTVCKIPSGCSLKIFNNQEFAQLLAQSVNHGFETVYELTKMCTIRMSFVKGWGAEYHRQDVTSTPCWIEIHLHGPLQWLDKVLTQMGSPHNPISSVS</sequence>
<feature type="chain" id="PRO_0000090847" description="Mothers against decapentaplegic homolog 1">
    <location>
        <begin position="1"/>
        <end position="465"/>
    </location>
</feature>
<feature type="domain" description="MH1" evidence="3">
    <location>
        <begin position="12"/>
        <end position="136"/>
    </location>
</feature>
<feature type="domain" description="MH2" evidence="4">
    <location>
        <begin position="271"/>
        <end position="465"/>
    </location>
</feature>
<feature type="region of interest" description="Disordered" evidence="5">
    <location>
        <begin position="162"/>
        <end position="248"/>
    </location>
</feature>
<feature type="region of interest" description="L3 loop" evidence="7">
    <location>
        <begin position="418"/>
        <end position="428"/>
    </location>
</feature>
<feature type="compositionally biased region" description="Low complexity" evidence="5">
    <location>
        <begin position="179"/>
        <end position="210"/>
    </location>
</feature>
<feature type="compositionally biased region" description="Pro residues" evidence="5">
    <location>
        <begin position="221"/>
        <end position="232"/>
    </location>
</feature>
<feature type="binding site" evidence="1">
    <location>
        <position position="64"/>
    </location>
    <ligand>
        <name>Zn(2+)</name>
        <dbReference type="ChEBI" id="CHEBI:29105"/>
    </ligand>
</feature>
<feature type="binding site" evidence="1">
    <location>
        <position position="109"/>
    </location>
    <ligand>
        <name>Zn(2+)</name>
        <dbReference type="ChEBI" id="CHEBI:29105"/>
    </ligand>
</feature>
<feature type="binding site" evidence="1">
    <location>
        <position position="121"/>
    </location>
    <ligand>
        <name>Zn(2+)</name>
        <dbReference type="ChEBI" id="CHEBI:29105"/>
    </ligand>
</feature>
<feature type="binding site" evidence="1">
    <location>
        <position position="126"/>
    </location>
    <ligand>
        <name>Zn(2+)</name>
        <dbReference type="ChEBI" id="CHEBI:29105"/>
    </ligand>
</feature>
<feature type="modified residue" description="N-acetylmethionine" evidence="26">
    <location>
        <position position="1"/>
    </location>
</feature>
<feature type="modified residue" description="Phosphothreonine; by MINK1, TNIK and MAP4K4" evidence="14">
    <location>
        <position position="322"/>
    </location>
</feature>
<feature type="modified residue" description="Phosphoserine" evidence="4 7 24">
    <location>
        <position position="463"/>
    </location>
</feature>
<feature type="modified residue" description="Phosphoserine" evidence="4 7 24">
    <location>
        <position position="465"/>
    </location>
</feature>
<feature type="splice variant" id="VSP_057163" description="In isoform 2." evidence="27">
    <original>MNVTSLFSFTSP</original>
    <variation>MFVLLFFPFLFL</variation>
    <location>
        <begin position="1"/>
        <end position="12"/>
    </location>
</feature>
<feature type="splice variant" id="VSP_057164" description="In isoform 2." evidence="27">
    <location>
        <begin position="13"/>
        <end position="133"/>
    </location>
</feature>
<feature type="splice variant" id="VSP_057165" description="In isoform 2." evidence="27">
    <original>ADTPPPAYLPPEDPMTQDGSQPMDTNMMAPPLPSEINRG</original>
    <variation>GRLECSVMFCSHIRQCYHSVTEKLGQPAVEGGFQPWYMT</variation>
    <location>
        <begin position="220"/>
        <end position="258"/>
    </location>
</feature>
<feature type="splice variant" id="VSP_057166" description="In isoform 2." evidence="27">
    <location>
        <begin position="259"/>
        <end position="465"/>
    </location>
</feature>
<feature type="sequence variant" id="VAR_066869" description="Found in a patient with primary pulmonary hypertension; uncertain significance; affects SMAD-mediated signaling; dbSNP:rs587777018." evidence="15">
    <original>V</original>
    <variation>A</variation>
    <location>
        <position position="3"/>
    </location>
</feature>
<feature type="mutagenesis site" description="Reduced trimerization." evidence="7">
    <original>D</original>
    <variation>H</variation>
    <location>
        <position position="297"/>
    </location>
</feature>
<feature type="mutagenesis site" description="Reduced trimerization." evidence="7">
    <original>V</original>
    <variation>D</variation>
    <location>
        <position position="317"/>
    </location>
</feature>
<feature type="mutagenesis site" description="Reduced trimerization." evidence="7">
    <original>K</original>
    <variation>S</variation>
    <location>
        <position position="373"/>
    </location>
</feature>
<feature type="mutagenesis site" description="Reduced trimerization." evidence="7">
    <original>K</original>
    <variation>S</variation>
    <location>
        <position position="418"/>
    </location>
</feature>
<feature type="mutagenesis site" description="Loss of phosphorylation." evidence="23">
    <original>G</original>
    <variation>S</variation>
    <location>
        <position position="419"/>
    </location>
</feature>
<feature type="mutagenesis site" description="Reduced trimerization." evidence="7">
    <original>Y</original>
    <variation>F</variation>
    <location>
        <position position="424"/>
    </location>
</feature>
<feature type="mutagenesis site" description="Reduced trimerization." evidence="7">
    <original>R</original>
    <variation>S</variation>
    <location>
        <position position="426"/>
    </location>
</feature>
<feature type="mutagenesis site" description="Reduced trimerization." evidence="7">
    <original>D</original>
    <variation>H</variation>
    <location>
        <position position="448"/>
    </location>
</feature>
<feature type="mutagenesis site" description="Abolishes the formation of the CHIP-SMAD1 complex." evidence="12">
    <original>I</original>
    <variation>D</variation>
    <location>
        <position position="461"/>
    </location>
</feature>
<feature type="mutagenesis site" description="Increases interaction with RANBPL3." evidence="20">
    <original>SVS</original>
    <variation>AVA</variation>
    <location>
        <begin position="463"/>
        <end position="465"/>
    </location>
</feature>
<feature type="mutagenesis site" description="Decreases interaction with RANBPL3." evidence="20">
    <original>SVS</original>
    <variation>DVD</variation>
    <location>
        <begin position="463"/>
        <end position="465"/>
    </location>
</feature>
<feature type="mutagenesis site" description="Abolishes the formation of the CHIP-SMAD1 complex." evidence="12">
    <original>V</original>
    <variation>D</variation>
    <location>
        <position position="464"/>
    </location>
</feature>
<feature type="strand" evidence="37">
    <location>
        <begin position="272"/>
        <end position="278"/>
    </location>
</feature>
<feature type="strand" evidence="39">
    <location>
        <begin position="281"/>
        <end position="288"/>
    </location>
</feature>
<feature type="strand" evidence="37">
    <location>
        <begin position="291"/>
        <end position="299"/>
    </location>
</feature>
<feature type="strand" evidence="37">
    <location>
        <begin position="305"/>
        <end position="310"/>
    </location>
</feature>
<feature type="helix" evidence="37">
    <location>
        <begin position="321"/>
        <end position="327"/>
    </location>
</feature>
<feature type="turn" evidence="39">
    <location>
        <begin position="328"/>
        <end position="332"/>
    </location>
</feature>
<feature type="strand" evidence="37">
    <location>
        <begin position="334"/>
        <end position="338"/>
    </location>
</feature>
<feature type="strand" evidence="37">
    <location>
        <begin position="340"/>
        <end position="347"/>
    </location>
</feature>
<feature type="strand" evidence="37">
    <location>
        <begin position="349"/>
        <end position="351"/>
    </location>
</feature>
<feature type="strand" evidence="37">
    <location>
        <begin position="353"/>
        <end position="356"/>
    </location>
</feature>
<feature type="helix" evidence="37">
    <location>
        <begin position="358"/>
        <end position="363"/>
    </location>
</feature>
<feature type="strand" evidence="37">
    <location>
        <begin position="372"/>
        <end position="374"/>
    </location>
</feature>
<feature type="strand" evidence="37">
    <location>
        <begin position="379"/>
        <end position="384"/>
    </location>
</feature>
<feature type="helix" evidence="37">
    <location>
        <begin position="385"/>
        <end position="393"/>
    </location>
</feature>
<feature type="turn" evidence="37">
    <location>
        <begin position="394"/>
        <end position="398"/>
    </location>
</feature>
<feature type="helix" evidence="37">
    <location>
        <begin position="400"/>
        <end position="404"/>
    </location>
</feature>
<feature type="helix" evidence="37">
    <location>
        <begin position="405"/>
        <end position="410"/>
    </location>
</feature>
<feature type="strand" evidence="37">
    <location>
        <begin position="411"/>
        <end position="417"/>
    </location>
</feature>
<feature type="strand" evidence="39">
    <location>
        <begin position="421"/>
        <end position="425"/>
    </location>
</feature>
<feature type="helix" evidence="37">
    <location>
        <begin position="429"/>
        <end position="431"/>
    </location>
</feature>
<feature type="strand" evidence="37">
    <location>
        <begin position="432"/>
        <end position="440"/>
    </location>
</feature>
<feature type="helix" evidence="37">
    <location>
        <begin position="441"/>
        <end position="451"/>
    </location>
</feature>
<feature type="strand" evidence="38">
    <location>
        <begin position="461"/>
        <end position="463"/>
    </location>
</feature>
<name>SMAD1_HUMAN</name>
<comment type="function">
    <text evidence="2 8 22 25">Transcriptional modulator that plays a role in various cellular processes, including embryonic development, cell differentiation, and tissue homeostasis (PubMed:9335504). Upon BMP ligand binding to their receptors at the cell surface, is phosphorylated by activated type I BMP receptors (BMPRIs) and associates with SMAD4 to form a heteromeric complex which translocates into the nucleus acting as transcription factor (PubMed:33667543). In turn, the hetero-trimeric complex recognizes cis-regulatory elements containing Smad Binding Elements (SBEs) to modulate the outcome of the signaling network (PubMed:33667543). SMAD1/OAZ1/PSMB4 complex mediates the degradation of the CREBBP/EP300 repressor SNIP1. Positively regulates BMP4-induced expression of odontogenic development regulator MSX1 following IPO7-mediated nuclear import (By similarity).</text>
</comment>
<comment type="subunit">
    <text evidence="2 6 7 8 9 10 11 13 16 18 19 20 21 22">Found in a complex with SMAD4 and YY1. Interacts with HGS, NANOG and ZCCHC12 (By similarity). Upon C-terminus phosphorylation: forms trimers with another SMAD1 and the co-SMAD SMAD4 (PubMed:21454478, PubMed:33667543). Interacts with PEBP2-alpha subunit, CREB-binding protein (CBP), p300, SMURF1, SMURF2, USP15 and HOXC8. Associates with ZNF423 or ZNF521 in response to BMP2 leading to activate transcription of BMP target genes. Interacts with SKOR1. Interacts (via MH2 domain) with LEMD3. Binding to LEMD3 results in at least a partial reduction of receptor-mediated phosphorylation. Forms a ternary complex with PSMB4 and OAZ1 before PSMB4 is incorporated into the 20S proteasome. Interacts (via MH2 domain) with FAM83G (via MH2 domain); in a SMAD4-independent manner (PubMed:24554596, PubMed:29789297). Interacts with ZC3H3 (By similarity). Interacts with TMEM119 (By similarity). Interacts (via MH1 and MH2 domains) with ZNF8 (By similarity). Interacts with RANBP3L; the interaction increases when SMAD1 is not phosphorylated and mediates SMAD1 nuclear export (PubMed:25755279). Interacts with EGR1; this interaction inhibits SMAD1 dephosphorylation (By similarity). Interacts with SMAD6 (PubMed:33667543). Interacts with YAP1 (PubMed:21685363). Interacts with MTMR4; negatively regulates BMP signaling through SMAD1 dephosphorylation and retention in endosomes (PubMed:23150675).</text>
</comment>
<comment type="interaction">
    <interactant intactId="EBI-1567153">
        <id>Q15797</id>
    </interactant>
    <interactant intactId="EBI-608057">
        <id>P10275</id>
        <label>AR</label>
    </interactant>
    <organismsDiffer>false</organismsDiffer>
    <experiments>6</experiments>
</comment>
<comment type="interaction">
    <interactant intactId="EBI-1567153">
        <id>Q15797</id>
    </interactant>
    <interactant intactId="EBI-751587">
        <id>Q9GZU7</id>
        <label>CTDSP1</label>
    </interactant>
    <organismsDiffer>false</organismsDiffer>
    <experiments>2</experiments>
</comment>
<comment type="interaction">
    <interactant intactId="EBI-1567153">
        <id>Q15797</id>
    </interactant>
    <interactant intactId="EBI-2802973">
        <id>O14595</id>
        <label>CTDSP2</label>
    </interactant>
    <organismsDiffer>false</organismsDiffer>
    <experiments>2</experiments>
</comment>
<comment type="interaction">
    <interactant intactId="EBI-1567153">
        <id>Q15797</id>
    </interactant>
    <interactant intactId="EBI-12544034">
        <id>O15194</id>
        <label>CTDSPL</label>
    </interactant>
    <organismsDiffer>false</organismsDiffer>
    <experiments>2</experiments>
</comment>
<comment type="interaction">
    <interactant intactId="EBI-1567153">
        <id>Q15797</id>
    </interactant>
    <interactant intactId="EBI-351962">
        <id>P17844</id>
        <label>DDX5</label>
    </interactant>
    <organismsDiffer>false</organismsDiffer>
    <experiments>4</experiments>
</comment>
<comment type="interaction">
    <interactant intactId="EBI-1567153">
        <id>Q15797</id>
    </interactant>
    <interactant intactId="EBI-528367">
        <id>Q9NRR4</id>
        <label>DROSHA</label>
    </interactant>
    <organismsDiffer>false</organismsDiffer>
    <experiments>3</experiments>
</comment>
<comment type="interaction">
    <interactant intactId="EBI-1567153">
        <id>Q15797</id>
    </interactant>
    <interactant intactId="EBI-12135243">
        <id>O95208-2</id>
        <label>EPN2</label>
    </interactant>
    <organismsDiffer>false</organismsDiffer>
    <experiments>3</experiments>
</comment>
<comment type="interaction">
    <interactant intactId="EBI-1567153">
        <id>Q15797</id>
    </interactant>
    <interactant intactId="EBI-358808">
        <id>O15397</id>
        <label>IPO8</label>
    </interactant>
    <organismsDiffer>false</organismsDiffer>
    <experiments>2</experiments>
</comment>
<comment type="interaction">
    <interactant intactId="EBI-1567153">
        <id>Q15797</id>
    </interactant>
    <interactant intactId="EBI-2561428">
        <id>Q9Y2U8</id>
        <label>LEMD3</label>
    </interactant>
    <organismsDiffer>false</organismsDiffer>
    <experiments>5</experiments>
</comment>
<comment type="interaction">
    <interactant intactId="EBI-1567153">
        <id>Q15797</id>
    </interactant>
    <interactant intactId="EBI-748974">
        <id>Q96CV9</id>
        <label>OPTN</label>
    </interactant>
    <organismsDiffer>false</organismsDiffer>
    <experiments>3</experiments>
</comment>
<comment type="interaction">
    <interactant intactId="EBI-1567153">
        <id>Q15797</id>
    </interactant>
    <interactant intactId="EBI-603350">
        <id>P28070</id>
        <label>PSMB4</label>
    </interactant>
    <organismsDiffer>false</organismsDiffer>
    <experiments>4</experiments>
</comment>
<comment type="interaction">
    <interactant intactId="EBI-1567153">
        <id>Q15797</id>
    </interactant>
    <interactant intactId="EBI-1567153">
        <id>Q15797</id>
        <label>SMAD1</label>
    </interactant>
    <organismsDiffer>false</organismsDiffer>
    <experiments>5</experiments>
</comment>
<comment type="interaction">
    <interactant intactId="EBI-1567153">
        <id>Q15797</id>
    </interactant>
    <interactant intactId="EBI-347263">
        <id>Q13485</id>
        <label>SMAD4</label>
    </interactant>
    <organismsDiffer>false</organismsDiffer>
    <experiments>12</experiments>
</comment>
<comment type="interaction">
    <interactant intactId="EBI-1567153">
        <id>Q15797</id>
    </interactant>
    <interactant intactId="EBI-976374">
        <id>O43541</id>
        <label>SMAD6</label>
    </interactant>
    <organismsDiffer>false</organismsDiffer>
    <experiments>4</experiments>
</comment>
<comment type="interaction">
    <interactant intactId="EBI-1567153">
        <id>Q15797</id>
    </interactant>
    <interactant intactId="EBI-976466">
        <id>Q9HCE7</id>
        <label>SMURF1</label>
    </interactant>
    <organismsDiffer>false</organismsDiffer>
    <experiments>2</experiments>
</comment>
<comment type="interaction">
    <interactant intactId="EBI-1567153">
        <id>Q15797</id>
    </interactant>
    <interactant intactId="EBI-9845742">
        <id>Q9HCE7-2</id>
        <label>SMURF1</label>
    </interactant>
    <organismsDiffer>false</organismsDiffer>
    <experiments>2</experiments>
</comment>
<comment type="interaction">
    <interactant intactId="EBI-1567153">
        <id>Q15797</id>
    </interactant>
    <interactant intactId="EBI-396727">
        <id>Q9HAU4</id>
        <label>SMURF2</label>
    </interactant>
    <organismsDiffer>false</organismsDiffer>
    <experiments>7</experiments>
</comment>
<comment type="interaction">
    <interactant intactId="EBI-1567153">
        <id>Q15797</id>
    </interactant>
    <interactant intactId="EBI-954554">
        <id>P15374</id>
        <label>UCHL3</label>
    </interactant>
    <organismsDiffer>false</organismsDiffer>
    <experiments>2</experiments>
</comment>
<comment type="interaction">
    <interactant intactId="EBI-1567153">
        <id>Q15797</id>
    </interactant>
    <interactant intactId="EBI-1044059">
        <id>P46937</id>
        <label>YAP1</label>
    </interactant>
    <organismsDiffer>false</organismsDiffer>
    <experiments>3</experiments>
</comment>
<comment type="subcellular location">
    <subcellularLocation>
        <location evidence="10 25">Cytoplasm</location>
    </subcellularLocation>
    <subcellularLocation>
        <location evidence="10 17 25">Nucleus</location>
    </subcellularLocation>
    <text evidence="2 10">Cytoplasmic in the absence of ligand. Migrates to the nucleus when complexed with SMAD4 (PubMed:15647271). Co-localizes with LEMD3 at the nucleus inner membrane (PubMed:15647271). Exported from the nucleus to the cytoplasm when dephosphorylated (By similarity).</text>
</comment>
<comment type="alternative products">
    <event type="alternative splicing"/>
    <isoform>
        <id>Q15797-1</id>
        <name>1</name>
        <sequence type="displayed"/>
    </isoform>
    <isoform>
        <id>Q15797-2</id>
        <name>2</name>
        <sequence type="described" ref="VSP_057163 VSP_057164 VSP_057165 VSP_057166"/>
    </isoform>
</comment>
<comment type="tissue specificity">
    <text>Ubiquitous. Highest expression seen in the heart and skeletal muscle.</text>
</comment>
<comment type="domain">
    <text evidence="7">The MH2 domain mediates phosphorylation-dependent trimerization through L3 loop binding of phosphoserines in the adjacent subunit.</text>
</comment>
<comment type="PTM">
    <text evidence="2 7 13 14 24 25">Phosphorylation of the C-terminal SVS motif by BMP type 1 receptor kinase activates SMAD1 by promoting dissociation from the receptor and trimerization with SMAD4. Phosphorylation by ERK2 MAP kinase in response to EGF or HGF prevents SMAD1 nuclear accumulation and transcriptional activity in response to BMP (PubMed:9335504). Dephosphorylation, probably by PPM1A, induces its export from the nucleus to the cytoplasm (By similarity). Dephosphorylation is inhibited by association with EGR1 (By similarity). Phosphorylation by CDK8/9 creates binding sites for YAP1, and subsequent phosphorylation by GSK3 switches off YAP1 binding and adds binding sites for SMURF1 (PubMed:21685363).</text>
</comment>
<comment type="PTM">
    <text evidence="2 12 16">Ubiquitinated by SMAD-specific E3 ubiquitin ligase SMURF1, leading to its degradation. Monoubiquitinated, leading to prevent DNA-binding. Deubiquitination by USP15 alleviates inhibition and promotes activation of TGF-beta target genes. Dephosphorylation, probably by PPM1A, induces its export from the nucleus to the cytoplasm (By similarity). Phospho-SMAD1 is ubiquitinated by CHIP leading to disruption of the SMAD1-SMAD4 complex (PubMed:21454478).</text>
</comment>
<comment type="disease">
    <text evidence="15">SMAD1 variants may be associated with susceptibility to pulmonary hypertension, a disorder characterized by plexiform lesions of proliferating endothelial cells in pulmonary arterioles. The lesions lead to elevated pulmonary arterial pression, right ventricular failure, and death. The disease can occur from infancy throughout life and it has a mean age at onset of 36 years. Penetrance is reduced. Although familial pulmonary hypertension is rare, cases secondary to known etiologies are more common and include those associated with the appetite-suppressant drugs.</text>
</comment>
<comment type="similarity">
    <text evidence="28">Belongs to the dwarfin/SMAD family.</text>
</comment>
<dbReference type="EMBL" id="U59912">
    <property type="protein sequence ID" value="AAC50790.1"/>
    <property type="molecule type" value="mRNA"/>
</dbReference>
<dbReference type="EMBL" id="U59423">
    <property type="protein sequence ID" value="AAB06852.1"/>
    <property type="molecule type" value="mRNA"/>
</dbReference>
<dbReference type="EMBL" id="U54826">
    <property type="protein sequence ID" value="AAC50493.1"/>
    <property type="molecule type" value="mRNA"/>
</dbReference>
<dbReference type="EMBL" id="U57456">
    <property type="protein sequence ID" value="AAC50621.1"/>
    <property type="molecule type" value="mRNA"/>
</dbReference>
<dbReference type="EMBL" id="BT007386">
    <property type="protein sequence ID" value="AAP36050.1"/>
    <property type="molecule type" value="mRNA"/>
</dbReference>
<dbReference type="EMBL" id="AK293055">
    <property type="protein sequence ID" value="BAF85744.1"/>
    <property type="molecule type" value="mRNA"/>
</dbReference>
<dbReference type="EMBL" id="AL117396">
    <property type="protein sequence ID" value="CAB55898.1"/>
    <property type="molecule type" value="Genomic_DNA"/>
</dbReference>
<dbReference type="EMBL" id="CH471056">
    <property type="protein sequence ID" value="EAX05037.1"/>
    <property type="molecule type" value="Genomic_DNA"/>
</dbReference>
<dbReference type="EMBL" id="CH471056">
    <property type="protein sequence ID" value="EAX05038.1"/>
    <property type="molecule type" value="Genomic_DNA"/>
</dbReference>
<dbReference type="EMBL" id="CH471056">
    <property type="protein sequence ID" value="EAX05039.1"/>
    <property type="molecule type" value="Genomic_DNA"/>
</dbReference>
<dbReference type="EMBL" id="CH471056">
    <property type="protein sequence ID" value="EAX05040.1"/>
    <property type="molecule type" value="Genomic_DNA"/>
</dbReference>
<dbReference type="EMBL" id="BC001878">
    <property type="protein sequence ID" value="AAH01878.1"/>
    <property type="molecule type" value="mRNA"/>
</dbReference>
<dbReference type="CCDS" id="CCDS3765.1">
    <molecule id="Q15797-1"/>
</dbReference>
<dbReference type="PIR" id="S68987">
    <property type="entry name" value="S68987"/>
</dbReference>
<dbReference type="RefSeq" id="NP_001003688.1">
    <molecule id="Q15797-1"/>
    <property type="nucleotide sequence ID" value="NM_001003688.1"/>
</dbReference>
<dbReference type="RefSeq" id="NP_001341740.1">
    <molecule id="Q15797-1"/>
    <property type="nucleotide sequence ID" value="NM_001354811.1"/>
</dbReference>
<dbReference type="RefSeq" id="NP_001341741.1">
    <molecule id="Q15797-1"/>
    <property type="nucleotide sequence ID" value="NM_001354812.1"/>
</dbReference>
<dbReference type="RefSeq" id="NP_001341742.1">
    <molecule id="Q15797-1"/>
    <property type="nucleotide sequence ID" value="NM_001354813.1"/>
</dbReference>
<dbReference type="RefSeq" id="NP_001341743.1">
    <molecule id="Q15797-1"/>
    <property type="nucleotide sequence ID" value="NM_001354814.1"/>
</dbReference>
<dbReference type="RefSeq" id="NP_001341745.1">
    <molecule id="Q15797-1"/>
    <property type="nucleotide sequence ID" value="NM_001354816.1"/>
</dbReference>
<dbReference type="RefSeq" id="NP_001341746.1">
    <molecule id="Q15797-1"/>
    <property type="nucleotide sequence ID" value="NM_001354817.1"/>
</dbReference>
<dbReference type="RefSeq" id="NP_005891.1">
    <molecule id="Q15797-1"/>
    <property type="nucleotide sequence ID" value="NM_005900.3"/>
</dbReference>
<dbReference type="RefSeq" id="XP_005263049.1">
    <property type="nucleotide sequence ID" value="XM_005262992.3"/>
</dbReference>
<dbReference type="RefSeq" id="XP_006714280.1">
    <property type="nucleotide sequence ID" value="XM_006714217.2"/>
</dbReference>
<dbReference type="RefSeq" id="XP_011530263.1">
    <property type="nucleotide sequence ID" value="XM_011531961.1"/>
</dbReference>
<dbReference type="RefSeq" id="XP_011530264.1">
    <molecule id="Q15797-1"/>
    <property type="nucleotide sequence ID" value="XM_011531962.3"/>
</dbReference>
<dbReference type="RefSeq" id="XP_011530265.1">
    <property type="nucleotide sequence ID" value="XM_011531963.1"/>
</dbReference>
<dbReference type="RefSeq" id="XP_011530266.1">
    <molecule id="Q15797-1"/>
    <property type="nucleotide sequence ID" value="XM_011531964.3"/>
</dbReference>
<dbReference type="RefSeq" id="XP_047271644.1">
    <molecule id="Q15797-1"/>
    <property type="nucleotide sequence ID" value="XM_047415688.1"/>
</dbReference>
<dbReference type="RefSeq" id="XP_047271645.1">
    <molecule id="Q15797-1"/>
    <property type="nucleotide sequence ID" value="XM_047415689.1"/>
</dbReference>
<dbReference type="RefSeq" id="XP_047271646.1">
    <molecule id="Q15797-1"/>
    <property type="nucleotide sequence ID" value="XM_047415690.1"/>
</dbReference>
<dbReference type="RefSeq" id="XP_047271647.1">
    <molecule id="Q15797-1"/>
    <property type="nucleotide sequence ID" value="XM_047415691.1"/>
</dbReference>
<dbReference type="RefSeq" id="XP_054205997.1">
    <molecule id="Q15797-1"/>
    <property type="nucleotide sequence ID" value="XM_054350022.1"/>
</dbReference>
<dbReference type="RefSeq" id="XP_054205998.1">
    <molecule id="Q15797-1"/>
    <property type="nucleotide sequence ID" value="XM_054350023.1"/>
</dbReference>
<dbReference type="RefSeq" id="XP_054205999.1">
    <molecule id="Q15797-1"/>
    <property type="nucleotide sequence ID" value="XM_054350024.1"/>
</dbReference>
<dbReference type="RefSeq" id="XP_054206000.1">
    <molecule id="Q15797-1"/>
    <property type="nucleotide sequence ID" value="XM_054350025.1"/>
</dbReference>
<dbReference type="RefSeq" id="XP_054206001.1">
    <molecule id="Q15797-1"/>
    <property type="nucleotide sequence ID" value="XM_054350026.1"/>
</dbReference>
<dbReference type="RefSeq" id="XP_054206002.1">
    <molecule id="Q15797-1"/>
    <property type="nucleotide sequence ID" value="XM_054350027.1"/>
</dbReference>
<dbReference type="RefSeq" id="XP_054206003.1">
    <molecule id="Q15797-1"/>
    <property type="nucleotide sequence ID" value="XM_054350028.1"/>
</dbReference>
<dbReference type="PDB" id="1KHU">
    <property type="method" value="X-ray"/>
    <property type="resolution" value="2.50 A"/>
    <property type="chains" value="A/B/C/D=248-465"/>
</dbReference>
<dbReference type="PDB" id="2LAW">
    <property type="method" value="NMR"/>
    <property type="chains" value="B=222-233"/>
</dbReference>
<dbReference type="PDB" id="2LAX">
    <property type="method" value="NMR"/>
    <property type="chains" value="B=201-209"/>
</dbReference>
<dbReference type="PDB" id="2LAY">
    <property type="method" value="NMR"/>
    <property type="chains" value="B=201-209"/>
</dbReference>
<dbReference type="PDB" id="2LAZ">
    <property type="method" value="NMR"/>
    <property type="chains" value="B=210-217"/>
</dbReference>
<dbReference type="PDB" id="2LB0">
    <property type="method" value="NMR"/>
    <property type="chains" value="B=208-217"/>
</dbReference>
<dbReference type="PDB" id="2LB1">
    <property type="method" value="NMR"/>
    <property type="chains" value="B=220-233"/>
</dbReference>
<dbReference type="PDB" id="3Q47">
    <property type="method" value="X-ray"/>
    <property type="resolution" value="1.70 A"/>
    <property type="chains" value="C=456-464"/>
</dbReference>
<dbReference type="PDB" id="3Q4A">
    <property type="method" value="X-ray"/>
    <property type="resolution" value="1.54 A"/>
    <property type="chains" value="C=456-465"/>
</dbReference>
<dbReference type="PDB" id="5ZOK">
    <property type="method" value="X-ray"/>
    <property type="resolution" value="2.85 A"/>
    <property type="chains" value="A/C=259-462"/>
</dbReference>
<dbReference type="PDBsum" id="1KHU"/>
<dbReference type="PDBsum" id="2LAW"/>
<dbReference type="PDBsum" id="2LAX"/>
<dbReference type="PDBsum" id="2LAY"/>
<dbReference type="PDBsum" id="2LAZ"/>
<dbReference type="PDBsum" id="2LB0"/>
<dbReference type="PDBsum" id="2LB1"/>
<dbReference type="PDBsum" id="3Q47"/>
<dbReference type="PDBsum" id="3Q4A"/>
<dbReference type="PDBsum" id="5ZOK"/>
<dbReference type="SMR" id="Q15797"/>
<dbReference type="BioGRID" id="110261">
    <property type="interactions" value="178"/>
</dbReference>
<dbReference type="ComplexPortal" id="CPX-144">
    <property type="entry name" value="SMAD1 homotrimer"/>
</dbReference>
<dbReference type="ComplexPortal" id="CPX-54">
    <property type="entry name" value="SMAD1-SMAD4 complex"/>
</dbReference>
<dbReference type="CORUM" id="Q15797"/>
<dbReference type="DIP" id="DIP-38538N"/>
<dbReference type="FunCoup" id="Q15797">
    <property type="interactions" value="1471"/>
</dbReference>
<dbReference type="IntAct" id="Q15797">
    <property type="interactions" value="93"/>
</dbReference>
<dbReference type="MINT" id="Q15797"/>
<dbReference type="STRING" id="9606.ENSP00000305769"/>
<dbReference type="MoonDB" id="Q15797">
    <property type="type" value="Predicted"/>
</dbReference>
<dbReference type="iPTMnet" id="Q15797"/>
<dbReference type="PhosphoSitePlus" id="Q15797"/>
<dbReference type="SwissPalm" id="Q15797"/>
<dbReference type="BioMuta" id="SMAD1"/>
<dbReference type="DMDM" id="13633915"/>
<dbReference type="jPOST" id="Q15797"/>
<dbReference type="MassIVE" id="Q15797"/>
<dbReference type="PaxDb" id="9606-ENSP00000426568"/>
<dbReference type="PeptideAtlas" id="Q15797"/>
<dbReference type="ProteomicsDB" id="60766">
    <molecule id="Q15797-1"/>
</dbReference>
<dbReference type="Pumba" id="Q15797"/>
<dbReference type="Antibodypedia" id="3950">
    <property type="antibodies" value="1356 antibodies from 43 providers"/>
</dbReference>
<dbReference type="DNASU" id="4086"/>
<dbReference type="Ensembl" id="ENST00000302085.9">
    <molecule id="Q15797-1"/>
    <property type="protein sequence ID" value="ENSP00000305769.4"/>
    <property type="gene ID" value="ENSG00000170365.10"/>
</dbReference>
<dbReference type="Ensembl" id="ENST00000394092.6">
    <molecule id="Q15797-1"/>
    <property type="protein sequence ID" value="ENSP00000377652.2"/>
    <property type="gene ID" value="ENSG00000170365.10"/>
</dbReference>
<dbReference type="Ensembl" id="ENST00000515385.1">
    <molecule id="Q15797-1"/>
    <property type="protein sequence ID" value="ENSP00000426568.1"/>
    <property type="gene ID" value="ENSG00000170365.10"/>
</dbReference>
<dbReference type="GeneID" id="4086"/>
<dbReference type="KEGG" id="hsa:4086"/>
<dbReference type="MANE-Select" id="ENST00000302085.9">
    <property type="protein sequence ID" value="ENSP00000305769.4"/>
    <property type="RefSeq nucleotide sequence ID" value="NM_005900.3"/>
    <property type="RefSeq protein sequence ID" value="NP_005891.1"/>
</dbReference>
<dbReference type="UCSC" id="uc003ikc.4">
    <molecule id="Q15797-1"/>
    <property type="organism name" value="human"/>
</dbReference>
<dbReference type="AGR" id="HGNC:6767"/>
<dbReference type="CTD" id="4086"/>
<dbReference type="DisGeNET" id="4086"/>
<dbReference type="GeneCards" id="SMAD1"/>
<dbReference type="HGNC" id="HGNC:6767">
    <property type="gene designation" value="SMAD1"/>
</dbReference>
<dbReference type="HPA" id="ENSG00000170365">
    <property type="expression patterns" value="Low tissue specificity"/>
</dbReference>
<dbReference type="MalaCards" id="SMAD1"/>
<dbReference type="MIM" id="601595">
    <property type="type" value="gene"/>
</dbReference>
<dbReference type="neXtProt" id="NX_Q15797"/>
<dbReference type="OpenTargets" id="ENSG00000170365"/>
<dbReference type="PharmGKB" id="PA30524"/>
<dbReference type="VEuPathDB" id="HostDB:ENSG00000170365"/>
<dbReference type="eggNOG" id="KOG3701">
    <property type="taxonomic scope" value="Eukaryota"/>
</dbReference>
<dbReference type="GeneTree" id="ENSGT00940000154391"/>
<dbReference type="HOGENOM" id="CLU_026736_0_2_1"/>
<dbReference type="InParanoid" id="Q15797"/>
<dbReference type="OMA" id="FIQSRNC"/>
<dbReference type="OrthoDB" id="5794312at2759"/>
<dbReference type="PAN-GO" id="Q15797">
    <property type="GO annotations" value="10 GO annotations based on evolutionary models"/>
</dbReference>
<dbReference type="PhylomeDB" id="Q15797"/>
<dbReference type="TreeFam" id="TF314923"/>
<dbReference type="PathwayCommons" id="Q15797"/>
<dbReference type="Reactome" id="R-HSA-201451">
    <property type="pathway name" value="Signaling by BMP"/>
</dbReference>
<dbReference type="Reactome" id="R-HSA-5689880">
    <property type="pathway name" value="Ub-specific processing proteases"/>
</dbReference>
<dbReference type="Reactome" id="R-HSA-8941326">
    <property type="pathway name" value="RUNX2 regulates bone development"/>
</dbReference>
<dbReference type="Reactome" id="R-HSA-9733709">
    <property type="pathway name" value="Cardiogenesis"/>
</dbReference>
<dbReference type="Reactome" id="R-HSA-9844594">
    <property type="pathway name" value="Transcriptional regulation of brown and beige adipocyte differentiation by EBF2"/>
</dbReference>
<dbReference type="SignaLink" id="Q15797"/>
<dbReference type="SIGNOR" id="Q15797"/>
<dbReference type="BioGRID-ORCS" id="4086">
    <property type="hits" value="6 hits in 1169 CRISPR screens"/>
</dbReference>
<dbReference type="CD-CODE" id="8C2F96ED">
    <property type="entry name" value="Centrosome"/>
</dbReference>
<dbReference type="ChiTaRS" id="SMAD1">
    <property type="organism name" value="human"/>
</dbReference>
<dbReference type="EvolutionaryTrace" id="Q15797"/>
<dbReference type="GeneWiki" id="Mothers_against_decapentaplegic_homolog_1"/>
<dbReference type="GenomeRNAi" id="4086"/>
<dbReference type="Pharos" id="Q15797">
    <property type="development level" value="Tbio"/>
</dbReference>
<dbReference type="PRO" id="PR:Q15797"/>
<dbReference type="Proteomes" id="UP000005640">
    <property type="component" value="Chromosome 4"/>
</dbReference>
<dbReference type="RNAct" id="Q15797">
    <property type="molecule type" value="protein"/>
</dbReference>
<dbReference type="Bgee" id="ENSG00000170365">
    <property type="expression patterns" value="Expressed in secondary oocyte and 217 other cell types or tissues"/>
</dbReference>
<dbReference type="ExpressionAtlas" id="Q15797">
    <property type="expression patterns" value="baseline and differential"/>
</dbReference>
<dbReference type="GO" id="GO:0000785">
    <property type="term" value="C:chromatin"/>
    <property type="evidence" value="ECO:0000314"/>
    <property type="project" value="UniProt"/>
</dbReference>
<dbReference type="GO" id="GO:0005737">
    <property type="term" value="C:cytoplasm"/>
    <property type="evidence" value="ECO:0000314"/>
    <property type="project" value="BHF-UCL"/>
</dbReference>
<dbReference type="GO" id="GO:0005829">
    <property type="term" value="C:cytosol"/>
    <property type="evidence" value="ECO:0000304"/>
    <property type="project" value="Reactome"/>
</dbReference>
<dbReference type="GO" id="GO:0071144">
    <property type="term" value="C:heteromeric SMAD protein complex"/>
    <property type="evidence" value="ECO:0000353"/>
    <property type="project" value="ComplexPortal"/>
</dbReference>
<dbReference type="GO" id="GO:0071142">
    <property type="term" value="C:homomeric SMAD protein complex"/>
    <property type="evidence" value="ECO:0000353"/>
    <property type="project" value="ComplexPortal"/>
</dbReference>
<dbReference type="GO" id="GO:0001673">
    <property type="term" value="C:male germ cell nucleus"/>
    <property type="evidence" value="ECO:0000314"/>
    <property type="project" value="UniProt"/>
</dbReference>
<dbReference type="GO" id="GO:0016020">
    <property type="term" value="C:membrane"/>
    <property type="evidence" value="ECO:0000303"/>
    <property type="project" value="UniProtKB"/>
</dbReference>
<dbReference type="GO" id="GO:0005637">
    <property type="term" value="C:nuclear inner membrane"/>
    <property type="evidence" value="ECO:0000314"/>
    <property type="project" value="UniProtKB"/>
</dbReference>
<dbReference type="GO" id="GO:0005654">
    <property type="term" value="C:nucleoplasm"/>
    <property type="evidence" value="ECO:0000304"/>
    <property type="project" value="Reactome"/>
</dbReference>
<dbReference type="GO" id="GO:0005634">
    <property type="term" value="C:nucleus"/>
    <property type="evidence" value="ECO:0000314"/>
    <property type="project" value="UniProtKB"/>
</dbReference>
<dbReference type="GO" id="GO:0032991">
    <property type="term" value="C:protein-containing complex"/>
    <property type="evidence" value="ECO:0000314"/>
    <property type="project" value="MGI"/>
</dbReference>
<dbReference type="GO" id="GO:0071141">
    <property type="term" value="C:SMAD protein complex"/>
    <property type="evidence" value="ECO:0000303"/>
    <property type="project" value="BHF-UCL"/>
</dbReference>
<dbReference type="GO" id="GO:0070410">
    <property type="term" value="F:co-SMAD binding"/>
    <property type="evidence" value="ECO:0000353"/>
    <property type="project" value="BHF-UCL"/>
</dbReference>
<dbReference type="GO" id="GO:0017151">
    <property type="term" value="F:DEAD/H-box RNA helicase binding"/>
    <property type="evidence" value="ECO:0000353"/>
    <property type="project" value="BHF-UCL"/>
</dbReference>
<dbReference type="GO" id="GO:0001228">
    <property type="term" value="F:DNA-binding transcription activator activity, RNA polymerase II-specific"/>
    <property type="evidence" value="ECO:0000314"/>
    <property type="project" value="NTNU_SB"/>
</dbReference>
<dbReference type="GO" id="GO:0003700">
    <property type="term" value="F:DNA-binding transcription factor activity"/>
    <property type="evidence" value="ECO:0000314"/>
    <property type="project" value="BHF-UCL"/>
</dbReference>
<dbReference type="GO" id="GO:0000981">
    <property type="term" value="F:DNA-binding transcription factor activity, RNA polymerase II-specific"/>
    <property type="evidence" value="ECO:0000314"/>
    <property type="project" value="UniProt"/>
</dbReference>
<dbReference type="GO" id="GO:0070411">
    <property type="term" value="F:I-SMAD binding"/>
    <property type="evidence" value="ECO:0000353"/>
    <property type="project" value="BHF-UCL"/>
</dbReference>
<dbReference type="GO" id="GO:0042802">
    <property type="term" value="F:identical protein binding"/>
    <property type="evidence" value="ECO:0000353"/>
    <property type="project" value="IntAct"/>
</dbReference>
<dbReference type="GO" id="GO:0046872">
    <property type="term" value="F:metal ion binding"/>
    <property type="evidence" value="ECO:0007669"/>
    <property type="project" value="UniProtKB-KW"/>
</dbReference>
<dbReference type="GO" id="GO:0070878">
    <property type="term" value="F:primary miRNA binding"/>
    <property type="evidence" value="ECO:0007669"/>
    <property type="project" value="Ensembl"/>
</dbReference>
<dbReference type="GO" id="GO:0019901">
    <property type="term" value="F:protein kinase binding"/>
    <property type="evidence" value="ECO:0000353"/>
    <property type="project" value="UniProtKB"/>
</dbReference>
<dbReference type="GO" id="GO:0000978">
    <property type="term" value="F:RNA polymerase II cis-regulatory region sequence-specific DNA binding"/>
    <property type="evidence" value="ECO:0000314"/>
    <property type="project" value="NTNU_SB"/>
</dbReference>
<dbReference type="GO" id="GO:0031625">
    <property type="term" value="F:ubiquitin protein ligase binding"/>
    <property type="evidence" value="ECO:0000353"/>
    <property type="project" value="BHF-UCL"/>
</dbReference>
<dbReference type="GO" id="GO:0009653">
    <property type="term" value="P:anatomical structure morphogenesis"/>
    <property type="evidence" value="ECO:0000318"/>
    <property type="project" value="GO_Central"/>
</dbReference>
<dbReference type="GO" id="GO:0030509">
    <property type="term" value="P:BMP signaling pathway"/>
    <property type="evidence" value="ECO:0000314"/>
    <property type="project" value="UniProtKB"/>
</dbReference>
<dbReference type="GO" id="GO:0060348">
    <property type="term" value="P:bone development"/>
    <property type="evidence" value="ECO:0007669"/>
    <property type="project" value="Ensembl"/>
</dbReference>
<dbReference type="GO" id="GO:0003161">
    <property type="term" value="P:cardiac conduction system development"/>
    <property type="evidence" value="ECO:0000303"/>
    <property type="project" value="BHF-UCL"/>
</dbReference>
<dbReference type="GO" id="GO:0060038">
    <property type="term" value="P:cardiac muscle cell proliferation"/>
    <property type="evidence" value="ECO:0007669"/>
    <property type="project" value="Ensembl"/>
</dbReference>
<dbReference type="GO" id="GO:0051216">
    <property type="term" value="P:cartilage development"/>
    <property type="evidence" value="ECO:0007669"/>
    <property type="project" value="Ensembl"/>
</dbReference>
<dbReference type="GO" id="GO:0030154">
    <property type="term" value="P:cell differentiation"/>
    <property type="evidence" value="ECO:0000318"/>
    <property type="project" value="GO_Central"/>
</dbReference>
<dbReference type="GO" id="GO:0006351">
    <property type="term" value="P:DNA-templated transcription"/>
    <property type="evidence" value="ECO:0000314"/>
    <property type="project" value="ComplexPortal"/>
</dbReference>
<dbReference type="GO" id="GO:0009880">
    <property type="term" value="P:embryonic pattern specification"/>
    <property type="evidence" value="ECO:0000250"/>
    <property type="project" value="UniProtKB"/>
</dbReference>
<dbReference type="GO" id="GO:0007276">
    <property type="term" value="P:gamete generation"/>
    <property type="evidence" value="ECO:0007669"/>
    <property type="project" value="Ensembl"/>
</dbReference>
<dbReference type="GO" id="GO:0030902">
    <property type="term" value="P:hindbrain development"/>
    <property type="evidence" value="ECO:0007669"/>
    <property type="project" value="Ensembl"/>
</dbReference>
<dbReference type="GO" id="GO:0006954">
    <property type="term" value="P:inflammatory response"/>
    <property type="evidence" value="ECO:0007669"/>
    <property type="project" value="Ensembl"/>
</dbReference>
<dbReference type="GO" id="GO:0006879">
    <property type="term" value="P:intracellular iron ion homeostasis"/>
    <property type="evidence" value="ECO:0000314"/>
    <property type="project" value="UniProt"/>
</dbReference>
<dbReference type="GO" id="GO:0000165">
    <property type="term" value="P:MAPK cascade"/>
    <property type="evidence" value="ECO:0007669"/>
    <property type="project" value="Ensembl"/>
</dbReference>
<dbReference type="GO" id="GO:0001710">
    <property type="term" value="P:mesodermal cell fate commitment"/>
    <property type="evidence" value="ECO:0007669"/>
    <property type="project" value="Ensembl"/>
</dbReference>
<dbReference type="GO" id="GO:0030901">
    <property type="term" value="P:midbrain development"/>
    <property type="evidence" value="ECO:0007669"/>
    <property type="project" value="Ensembl"/>
</dbReference>
<dbReference type="GO" id="GO:0008285">
    <property type="term" value="P:negative regulation of cell population proliferation"/>
    <property type="evidence" value="ECO:0007669"/>
    <property type="project" value="Ensembl"/>
</dbReference>
<dbReference type="GO" id="GO:0051148">
    <property type="term" value="P:negative regulation of muscle cell differentiation"/>
    <property type="evidence" value="ECO:0007669"/>
    <property type="project" value="Ensembl"/>
</dbReference>
<dbReference type="GO" id="GO:0001503">
    <property type="term" value="P:ossification"/>
    <property type="evidence" value="ECO:0000316"/>
    <property type="project" value="BHF-UCL"/>
</dbReference>
<dbReference type="GO" id="GO:0001649">
    <property type="term" value="P:osteoblast differentiation"/>
    <property type="evidence" value="ECO:0000314"/>
    <property type="project" value="UniProt"/>
</dbReference>
<dbReference type="GO" id="GO:0002051">
    <property type="term" value="P:osteoblast fate commitment"/>
    <property type="evidence" value="ECO:0007669"/>
    <property type="project" value="Ensembl"/>
</dbReference>
<dbReference type="GO" id="GO:0061036">
    <property type="term" value="P:positive regulation of cartilage development"/>
    <property type="evidence" value="ECO:0007669"/>
    <property type="project" value="Ensembl"/>
</dbReference>
<dbReference type="GO" id="GO:1900006">
    <property type="term" value="P:positive regulation of dendrite development"/>
    <property type="evidence" value="ECO:0000303"/>
    <property type="project" value="UniProt"/>
</dbReference>
<dbReference type="GO" id="GO:0010628">
    <property type="term" value="P:positive regulation of gene expression"/>
    <property type="evidence" value="ECO:0007669"/>
    <property type="project" value="Ensembl"/>
</dbReference>
<dbReference type="GO" id="GO:1902895">
    <property type="term" value="P:positive regulation of miRNA transcription"/>
    <property type="evidence" value="ECO:0007669"/>
    <property type="project" value="Ensembl"/>
</dbReference>
<dbReference type="GO" id="GO:0045669">
    <property type="term" value="P:positive regulation of osteoblast differentiation"/>
    <property type="evidence" value="ECO:0007669"/>
    <property type="project" value="Ensembl"/>
</dbReference>
<dbReference type="GO" id="GO:1903672">
    <property type="term" value="P:positive regulation of sprouting angiogenesis"/>
    <property type="evidence" value="ECO:0000315"/>
    <property type="project" value="BHF-UCL"/>
</dbReference>
<dbReference type="GO" id="GO:0045944">
    <property type="term" value="P:positive regulation of transcription by RNA polymerase II"/>
    <property type="evidence" value="ECO:0000314"/>
    <property type="project" value="NTNU_SB"/>
</dbReference>
<dbReference type="GO" id="GO:0031053">
    <property type="term" value="P:primary miRNA processing"/>
    <property type="evidence" value="ECO:0000304"/>
    <property type="project" value="BHF-UCL"/>
</dbReference>
<dbReference type="GO" id="GO:0006357">
    <property type="term" value="P:regulation of transcription by RNA polymerase II"/>
    <property type="evidence" value="ECO:0000318"/>
    <property type="project" value="GO_Central"/>
</dbReference>
<dbReference type="GO" id="GO:0007165">
    <property type="term" value="P:signal transduction"/>
    <property type="evidence" value="ECO:0000303"/>
    <property type="project" value="UniProtKB"/>
</dbReference>
<dbReference type="GO" id="GO:0060395">
    <property type="term" value="P:SMAD protein signal transduction"/>
    <property type="evidence" value="ECO:0000314"/>
    <property type="project" value="BHF-UCL"/>
</dbReference>
<dbReference type="GO" id="GO:0048863">
    <property type="term" value="P:stem cell differentiation"/>
    <property type="evidence" value="ECO:0000250"/>
    <property type="project" value="UniProt"/>
</dbReference>
<dbReference type="GO" id="GO:0006366">
    <property type="term" value="P:transcription by RNA polymerase II"/>
    <property type="evidence" value="ECO:0007669"/>
    <property type="project" value="Ensembl"/>
</dbReference>
<dbReference type="GO" id="GO:0007179">
    <property type="term" value="P:transforming growth factor beta receptor signaling pathway"/>
    <property type="evidence" value="ECO:0000314"/>
    <property type="project" value="ComplexPortal"/>
</dbReference>
<dbReference type="GO" id="GO:0001657">
    <property type="term" value="P:ureteric bud development"/>
    <property type="evidence" value="ECO:0007669"/>
    <property type="project" value="Ensembl"/>
</dbReference>
<dbReference type="CDD" id="cd10490">
    <property type="entry name" value="MH1_SMAD_1_5_9"/>
    <property type="match status" value="1"/>
</dbReference>
<dbReference type="CDD" id="cd10497">
    <property type="entry name" value="MH2_SMAD_1_5_9"/>
    <property type="match status" value="1"/>
</dbReference>
<dbReference type="DisProt" id="DP01206"/>
<dbReference type="FunFam" id="2.60.200.10:FF:000001">
    <property type="entry name" value="Mothers against decapentaplegic homolog"/>
    <property type="match status" value="1"/>
</dbReference>
<dbReference type="FunFam" id="3.90.520.10:FF:000001">
    <property type="entry name" value="Mothers against decapentaplegic homolog"/>
    <property type="match status" value="1"/>
</dbReference>
<dbReference type="Gene3D" id="2.60.200.10">
    <property type="match status" value="1"/>
</dbReference>
<dbReference type="Gene3D" id="3.90.520.10">
    <property type="entry name" value="SMAD MH1 domain"/>
    <property type="match status" value="1"/>
</dbReference>
<dbReference type="IDEAL" id="IID00174"/>
<dbReference type="InterPro" id="IPR013790">
    <property type="entry name" value="Dwarfin"/>
</dbReference>
<dbReference type="InterPro" id="IPR003619">
    <property type="entry name" value="MAD_homology1_Dwarfin-type"/>
</dbReference>
<dbReference type="InterPro" id="IPR013019">
    <property type="entry name" value="MAD_homology_MH1"/>
</dbReference>
<dbReference type="InterPro" id="IPR017855">
    <property type="entry name" value="SMAD-like_dom_sf"/>
</dbReference>
<dbReference type="InterPro" id="IPR001132">
    <property type="entry name" value="SMAD_dom_Dwarfin-type"/>
</dbReference>
<dbReference type="InterPro" id="IPR008984">
    <property type="entry name" value="SMAD_FHA_dom_sf"/>
</dbReference>
<dbReference type="InterPro" id="IPR036578">
    <property type="entry name" value="SMAD_MH1_sf"/>
</dbReference>
<dbReference type="PANTHER" id="PTHR13703:SF23">
    <property type="entry name" value="MOTHERS AGAINST DECAPENTAPLEGIC HOMOLOG 1"/>
    <property type="match status" value="1"/>
</dbReference>
<dbReference type="PANTHER" id="PTHR13703">
    <property type="entry name" value="SMAD"/>
    <property type="match status" value="1"/>
</dbReference>
<dbReference type="Pfam" id="PF03165">
    <property type="entry name" value="MH1"/>
    <property type="match status" value="1"/>
</dbReference>
<dbReference type="Pfam" id="PF03166">
    <property type="entry name" value="MH2"/>
    <property type="match status" value="1"/>
</dbReference>
<dbReference type="SMART" id="SM00523">
    <property type="entry name" value="DWA"/>
    <property type="match status" value="1"/>
</dbReference>
<dbReference type="SMART" id="SM00524">
    <property type="entry name" value="DWB"/>
    <property type="match status" value="1"/>
</dbReference>
<dbReference type="SUPFAM" id="SSF56366">
    <property type="entry name" value="SMAD MH1 domain"/>
    <property type="match status" value="1"/>
</dbReference>
<dbReference type="SUPFAM" id="SSF49879">
    <property type="entry name" value="SMAD/FHA domain"/>
    <property type="match status" value="1"/>
</dbReference>
<dbReference type="PROSITE" id="PS51075">
    <property type="entry name" value="MH1"/>
    <property type="match status" value="1"/>
</dbReference>
<dbReference type="PROSITE" id="PS51076">
    <property type="entry name" value="MH2"/>
    <property type="match status" value="1"/>
</dbReference>
<organism>
    <name type="scientific">Homo sapiens</name>
    <name type="common">Human</name>
    <dbReference type="NCBI Taxonomy" id="9606"/>
    <lineage>
        <taxon>Eukaryota</taxon>
        <taxon>Metazoa</taxon>
        <taxon>Chordata</taxon>
        <taxon>Craniata</taxon>
        <taxon>Vertebrata</taxon>
        <taxon>Euteleostomi</taxon>
        <taxon>Mammalia</taxon>
        <taxon>Eutheria</taxon>
        <taxon>Euarchontoglires</taxon>
        <taxon>Primates</taxon>
        <taxon>Haplorrhini</taxon>
        <taxon>Catarrhini</taxon>
        <taxon>Hominidae</taxon>
        <taxon>Homo</taxon>
    </lineage>
</organism>